<accession>Q07V78</accession>
<proteinExistence type="inferred from homology"/>
<dbReference type="EMBL" id="CP000463">
    <property type="protein sequence ID" value="ABJ04156.1"/>
    <property type="molecule type" value="Genomic_DNA"/>
</dbReference>
<dbReference type="SMR" id="Q07V78"/>
<dbReference type="STRING" id="316055.RPE_0196"/>
<dbReference type="KEGG" id="rpe:RPE_0196"/>
<dbReference type="eggNOG" id="COG0532">
    <property type="taxonomic scope" value="Bacteria"/>
</dbReference>
<dbReference type="HOGENOM" id="CLU_006301_10_0_5"/>
<dbReference type="OrthoDB" id="9811804at2"/>
<dbReference type="GO" id="GO:0005829">
    <property type="term" value="C:cytosol"/>
    <property type="evidence" value="ECO:0007669"/>
    <property type="project" value="TreeGrafter"/>
</dbReference>
<dbReference type="GO" id="GO:0005525">
    <property type="term" value="F:GTP binding"/>
    <property type="evidence" value="ECO:0007669"/>
    <property type="project" value="UniProtKB-KW"/>
</dbReference>
<dbReference type="GO" id="GO:0003924">
    <property type="term" value="F:GTPase activity"/>
    <property type="evidence" value="ECO:0007669"/>
    <property type="project" value="UniProtKB-UniRule"/>
</dbReference>
<dbReference type="GO" id="GO:0097216">
    <property type="term" value="F:guanosine tetraphosphate binding"/>
    <property type="evidence" value="ECO:0007669"/>
    <property type="project" value="UniProtKB-ARBA"/>
</dbReference>
<dbReference type="GO" id="GO:0003743">
    <property type="term" value="F:translation initiation factor activity"/>
    <property type="evidence" value="ECO:0007669"/>
    <property type="project" value="UniProtKB-UniRule"/>
</dbReference>
<dbReference type="CDD" id="cd01887">
    <property type="entry name" value="IF2_eIF5B"/>
    <property type="match status" value="1"/>
</dbReference>
<dbReference type="CDD" id="cd03702">
    <property type="entry name" value="IF2_mtIF2_II"/>
    <property type="match status" value="1"/>
</dbReference>
<dbReference type="CDD" id="cd03692">
    <property type="entry name" value="mtIF2_IVc"/>
    <property type="match status" value="1"/>
</dbReference>
<dbReference type="FunFam" id="2.40.30.10:FF:000007">
    <property type="entry name" value="Translation initiation factor IF-2"/>
    <property type="match status" value="1"/>
</dbReference>
<dbReference type="FunFam" id="2.40.30.10:FF:000008">
    <property type="entry name" value="Translation initiation factor IF-2"/>
    <property type="match status" value="1"/>
</dbReference>
<dbReference type="FunFam" id="3.40.50.10050:FF:000001">
    <property type="entry name" value="Translation initiation factor IF-2"/>
    <property type="match status" value="1"/>
</dbReference>
<dbReference type="FunFam" id="3.40.50.300:FF:000019">
    <property type="entry name" value="Translation initiation factor IF-2"/>
    <property type="match status" value="1"/>
</dbReference>
<dbReference type="Gene3D" id="3.40.50.300">
    <property type="entry name" value="P-loop containing nucleotide triphosphate hydrolases"/>
    <property type="match status" value="1"/>
</dbReference>
<dbReference type="Gene3D" id="2.40.30.10">
    <property type="entry name" value="Translation factors"/>
    <property type="match status" value="2"/>
</dbReference>
<dbReference type="Gene3D" id="3.40.50.10050">
    <property type="entry name" value="Translation initiation factor IF- 2, domain 3"/>
    <property type="match status" value="1"/>
</dbReference>
<dbReference type="HAMAP" id="MF_00100_B">
    <property type="entry name" value="IF_2_B"/>
    <property type="match status" value="1"/>
</dbReference>
<dbReference type="InterPro" id="IPR053905">
    <property type="entry name" value="EF-G-like_DII"/>
</dbReference>
<dbReference type="InterPro" id="IPR004161">
    <property type="entry name" value="EFTu-like_2"/>
</dbReference>
<dbReference type="InterPro" id="IPR013575">
    <property type="entry name" value="IF2_assoc_dom_bac"/>
</dbReference>
<dbReference type="InterPro" id="IPR044145">
    <property type="entry name" value="IF2_II"/>
</dbReference>
<dbReference type="InterPro" id="IPR006847">
    <property type="entry name" value="IF2_N"/>
</dbReference>
<dbReference type="InterPro" id="IPR027417">
    <property type="entry name" value="P-loop_NTPase"/>
</dbReference>
<dbReference type="InterPro" id="IPR005225">
    <property type="entry name" value="Small_GTP-bd"/>
</dbReference>
<dbReference type="InterPro" id="IPR000795">
    <property type="entry name" value="T_Tr_GTP-bd_dom"/>
</dbReference>
<dbReference type="InterPro" id="IPR000178">
    <property type="entry name" value="TF_IF2_bacterial-like"/>
</dbReference>
<dbReference type="InterPro" id="IPR015760">
    <property type="entry name" value="TIF_IF2"/>
</dbReference>
<dbReference type="InterPro" id="IPR023115">
    <property type="entry name" value="TIF_IF2_dom3"/>
</dbReference>
<dbReference type="InterPro" id="IPR036925">
    <property type="entry name" value="TIF_IF2_dom3_sf"/>
</dbReference>
<dbReference type="InterPro" id="IPR009000">
    <property type="entry name" value="Transl_B-barrel_sf"/>
</dbReference>
<dbReference type="NCBIfam" id="TIGR00487">
    <property type="entry name" value="IF-2"/>
    <property type="match status" value="1"/>
</dbReference>
<dbReference type="NCBIfam" id="TIGR00231">
    <property type="entry name" value="small_GTP"/>
    <property type="match status" value="1"/>
</dbReference>
<dbReference type="PANTHER" id="PTHR43381:SF5">
    <property type="entry name" value="TR-TYPE G DOMAIN-CONTAINING PROTEIN"/>
    <property type="match status" value="1"/>
</dbReference>
<dbReference type="PANTHER" id="PTHR43381">
    <property type="entry name" value="TRANSLATION INITIATION FACTOR IF-2-RELATED"/>
    <property type="match status" value="1"/>
</dbReference>
<dbReference type="Pfam" id="PF22042">
    <property type="entry name" value="EF-G_D2"/>
    <property type="match status" value="1"/>
</dbReference>
<dbReference type="Pfam" id="PF00009">
    <property type="entry name" value="GTP_EFTU"/>
    <property type="match status" value="1"/>
</dbReference>
<dbReference type="Pfam" id="PF03144">
    <property type="entry name" value="GTP_EFTU_D2"/>
    <property type="match status" value="1"/>
</dbReference>
<dbReference type="Pfam" id="PF11987">
    <property type="entry name" value="IF-2"/>
    <property type="match status" value="1"/>
</dbReference>
<dbReference type="Pfam" id="PF08364">
    <property type="entry name" value="IF2_assoc"/>
    <property type="match status" value="1"/>
</dbReference>
<dbReference type="Pfam" id="PF04760">
    <property type="entry name" value="IF2_N"/>
    <property type="match status" value="1"/>
</dbReference>
<dbReference type="SUPFAM" id="SSF52156">
    <property type="entry name" value="Initiation factor IF2/eIF5b, domain 3"/>
    <property type="match status" value="1"/>
</dbReference>
<dbReference type="SUPFAM" id="SSF52540">
    <property type="entry name" value="P-loop containing nucleoside triphosphate hydrolases"/>
    <property type="match status" value="1"/>
</dbReference>
<dbReference type="SUPFAM" id="SSF50447">
    <property type="entry name" value="Translation proteins"/>
    <property type="match status" value="2"/>
</dbReference>
<dbReference type="PROSITE" id="PS51722">
    <property type="entry name" value="G_TR_2"/>
    <property type="match status" value="1"/>
</dbReference>
<dbReference type="PROSITE" id="PS01176">
    <property type="entry name" value="IF2"/>
    <property type="match status" value="1"/>
</dbReference>
<evidence type="ECO:0000250" key="1"/>
<evidence type="ECO:0000255" key="2">
    <source>
        <dbReference type="HAMAP-Rule" id="MF_00100"/>
    </source>
</evidence>
<evidence type="ECO:0000256" key="3">
    <source>
        <dbReference type="SAM" id="MobiDB-lite"/>
    </source>
</evidence>
<gene>
    <name evidence="2" type="primary">infB</name>
    <name type="ordered locus">RPE_0196</name>
</gene>
<name>IF2_RHOP5</name>
<keyword id="KW-0963">Cytoplasm</keyword>
<keyword id="KW-0342">GTP-binding</keyword>
<keyword id="KW-0396">Initiation factor</keyword>
<keyword id="KW-0547">Nucleotide-binding</keyword>
<keyword id="KW-0648">Protein biosynthesis</keyword>
<protein>
    <recommendedName>
        <fullName evidence="2">Translation initiation factor IF-2</fullName>
    </recommendedName>
</protein>
<comment type="function">
    <text evidence="2">One of the essential components for the initiation of protein synthesis. Protects formylmethionyl-tRNA from spontaneous hydrolysis and promotes its binding to the 30S ribosomal subunits. Also involved in the hydrolysis of GTP during the formation of the 70S ribosomal complex.</text>
</comment>
<comment type="subcellular location">
    <subcellularLocation>
        <location evidence="2">Cytoplasm</location>
    </subcellularLocation>
</comment>
<comment type="similarity">
    <text evidence="2">Belongs to the TRAFAC class translation factor GTPase superfamily. Classic translation factor GTPase family. IF-2 subfamily.</text>
</comment>
<organism>
    <name type="scientific">Rhodopseudomonas palustris (strain BisA53)</name>
    <dbReference type="NCBI Taxonomy" id="316055"/>
    <lineage>
        <taxon>Bacteria</taxon>
        <taxon>Pseudomonadati</taxon>
        <taxon>Pseudomonadota</taxon>
        <taxon>Alphaproteobacteria</taxon>
        <taxon>Hyphomicrobiales</taxon>
        <taxon>Nitrobacteraceae</taxon>
        <taxon>Rhodopseudomonas</taxon>
    </lineage>
</organism>
<reference key="1">
    <citation type="submission" date="2006-09" db="EMBL/GenBank/DDBJ databases">
        <title>Complete sequence of Rhodopseudomonas palustris BisA53.</title>
        <authorList>
            <consortium name="US DOE Joint Genome Institute"/>
            <person name="Copeland A."/>
            <person name="Lucas S."/>
            <person name="Lapidus A."/>
            <person name="Barry K."/>
            <person name="Detter J.C."/>
            <person name="Glavina del Rio T."/>
            <person name="Hammon N."/>
            <person name="Israni S."/>
            <person name="Dalin E."/>
            <person name="Tice H."/>
            <person name="Pitluck S."/>
            <person name="Chain P."/>
            <person name="Malfatti S."/>
            <person name="Shin M."/>
            <person name="Vergez L."/>
            <person name="Schmutz J."/>
            <person name="Larimer F."/>
            <person name="Land M."/>
            <person name="Hauser L."/>
            <person name="Pelletier D.A."/>
            <person name="Kyrpides N."/>
            <person name="Kim E."/>
            <person name="Harwood C.S."/>
            <person name="Oda Y."/>
            <person name="Richardson P."/>
        </authorList>
    </citation>
    <scope>NUCLEOTIDE SEQUENCE [LARGE SCALE GENOMIC DNA]</scope>
    <source>
        <strain>BisA53</strain>
    </source>
</reference>
<feature type="chain" id="PRO_1000008315" description="Translation initiation factor IF-2">
    <location>
        <begin position="1"/>
        <end position="893"/>
    </location>
</feature>
<feature type="domain" description="tr-type G">
    <location>
        <begin position="389"/>
        <end position="560"/>
    </location>
</feature>
<feature type="region of interest" description="Disordered" evidence="3">
    <location>
        <begin position="1"/>
        <end position="266"/>
    </location>
</feature>
<feature type="region of interest" description="G1" evidence="1">
    <location>
        <begin position="398"/>
        <end position="405"/>
    </location>
</feature>
<feature type="region of interest" description="G2" evidence="1">
    <location>
        <begin position="423"/>
        <end position="427"/>
    </location>
</feature>
<feature type="region of interest" description="G3" evidence="1">
    <location>
        <begin position="446"/>
        <end position="449"/>
    </location>
</feature>
<feature type="region of interest" description="G4" evidence="1">
    <location>
        <begin position="500"/>
        <end position="503"/>
    </location>
</feature>
<feature type="region of interest" description="G5" evidence="1">
    <location>
        <begin position="536"/>
        <end position="538"/>
    </location>
</feature>
<feature type="compositionally biased region" description="Low complexity" evidence="3">
    <location>
        <begin position="59"/>
        <end position="70"/>
    </location>
</feature>
<feature type="compositionally biased region" description="Pro residues" evidence="3">
    <location>
        <begin position="71"/>
        <end position="92"/>
    </location>
</feature>
<feature type="compositionally biased region" description="Low complexity" evidence="3">
    <location>
        <begin position="93"/>
        <end position="104"/>
    </location>
</feature>
<feature type="compositionally biased region" description="Basic and acidic residues" evidence="3">
    <location>
        <begin position="128"/>
        <end position="148"/>
    </location>
</feature>
<feature type="compositionally biased region" description="Basic and acidic residues" evidence="3">
    <location>
        <begin position="155"/>
        <end position="196"/>
    </location>
</feature>
<feature type="compositionally biased region" description="Low complexity" evidence="3">
    <location>
        <begin position="197"/>
        <end position="226"/>
    </location>
</feature>
<feature type="binding site" evidence="2">
    <location>
        <begin position="398"/>
        <end position="405"/>
    </location>
    <ligand>
        <name>GTP</name>
        <dbReference type="ChEBI" id="CHEBI:37565"/>
    </ligand>
</feature>
<feature type="binding site" evidence="2">
    <location>
        <begin position="446"/>
        <end position="450"/>
    </location>
    <ligand>
        <name>GTP</name>
        <dbReference type="ChEBI" id="CHEBI:37565"/>
    </ligand>
</feature>
<feature type="binding site" evidence="2">
    <location>
        <begin position="500"/>
        <end position="503"/>
    </location>
    <ligand>
        <name>GTP</name>
        <dbReference type="ChEBI" id="CHEBI:37565"/>
    </ligand>
</feature>
<sequence length="893" mass="95638">MVDTKNPGDKTLSVSPSKTLTLKPRVEQGTVRQSFSHGRTKQVVVEKRGKRRIGGEGGPADAPTAAAAAPAPAPAPVPSAAPRPAAPPPPSRPQQSRSQSPSRSGSGVVLRTLTEDERSARATALADARVRDEEERRAAEAEVARRNSAEGIAQAEREAAEARRKAEEERHRHEEEAKRKAELEAKRRFGEEEAKRPAAAATPAKSATPAARPTGAPAVRAPGVAAEAGDDDEGPRQVRRGPGGAARPVIPPKQPAAKPAPSKQRGRLTLVTALTADDVRERSIASFRRRTQRLKGHASNEPKEKLVREVIVPEAITIQELANRMSERAVDVIRMLMKQGAMHKINDVIDADTAQLIAEELGHTVKRVAASDVEEGLFDVVDNSTDTEPRSPVVTVMGHVDHGKTSLLDALRHANVVSGEAGGITQHIGAYQVTSPESGKKITFIDTPGHAAFTAMRARGAKVTDIVILVVAADDGVMPQTVEAINHAKAAGVPIIVAINKIDKPDAKPERVRTELLQYNVQVESLGGDTVDVEVSAKNKTNLDKLLEMIALQAELLDLKTNEQRPAEGTVIEAKLDRGRGPVATVLVQRGTLKVGDIIVAGAEMGRVRALISDQGDTVESAGPSVPVEVLGFNGPPEAGDRLAVVENEARARQVTSYRAHQKREKAASLTGGMRGSLEQMMSQLKTVGRKEFPLIIKADVQGSLEAILGSLEKLGTEEVAARILHAGVGGISESDVTLAEGFNAVILGFSVRANKEAAAAAKRNGIEIRYYNIIYDLVDDIKKAMSGLLAPTLRETMLGNALILEIFNISKVGKVAGCRVTDGTVERGANVRLIRDNVVVHEGKLSTLKRFKDEVKEVQSGQECGMAFENYTDMRAGDVIECYRVETIQRSL</sequence>